<evidence type="ECO:0000255" key="1">
    <source>
        <dbReference type="HAMAP-Rule" id="MF_00274"/>
    </source>
</evidence>
<reference key="1">
    <citation type="journal article" date="2009" name="J. Bacteriol.">
        <title>Complete and draft genome sequences of six members of the Aquificales.</title>
        <authorList>
            <person name="Reysenbach A.-L."/>
            <person name="Hamamura N."/>
            <person name="Podar M."/>
            <person name="Griffiths E."/>
            <person name="Ferreira S."/>
            <person name="Hochstein R."/>
            <person name="Heidelberg J."/>
            <person name="Johnson J."/>
            <person name="Mead D."/>
            <person name="Pohorille A."/>
            <person name="Sarmiento M."/>
            <person name="Schweighofer K."/>
            <person name="Seshadri R."/>
            <person name="Voytek M.A."/>
        </authorList>
    </citation>
    <scope>NUCLEOTIDE SEQUENCE [LARGE SCALE GENOMIC DNA]</scope>
    <source>
        <strain>YO3AOP1</strain>
    </source>
</reference>
<keyword id="KW-0963">Cytoplasm</keyword>
<keyword id="KW-0238">DNA-binding</keyword>
<feature type="chain" id="PRO_1000114657" description="Nucleoid-associated protein SYO3AOP1_1366">
    <location>
        <begin position="1"/>
        <end position="110"/>
    </location>
</feature>
<proteinExistence type="inferred from homology"/>
<name>Y1366_SULSY</name>
<gene>
    <name type="ordered locus">SYO3AOP1_1366</name>
</gene>
<sequence length="110" mass="12046">MFNFGNLAELMKQAQSIKENVEKAKEELKNEKIVVEVGGGMVKVVSDGLGTVLDLEIDKSLLNENEYPVLKDLLIAAINEVSERSKEVVADKISQATGLPMNMSKFGGMF</sequence>
<accession>B2V5M9</accession>
<organism>
    <name type="scientific">Sulfurihydrogenibium sp. (strain YO3AOP1)</name>
    <dbReference type="NCBI Taxonomy" id="436114"/>
    <lineage>
        <taxon>Bacteria</taxon>
        <taxon>Pseudomonadati</taxon>
        <taxon>Aquificota</taxon>
        <taxon>Aquificia</taxon>
        <taxon>Aquificales</taxon>
        <taxon>Hydrogenothermaceae</taxon>
        <taxon>Sulfurihydrogenibium</taxon>
    </lineage>
</organism>
<dbReference type="EMBL" id="CP001080">
    <property type="protein sequence ID" value="ACD66973.1"/>
    <property type="molecule type" value="Genomic_DNA"/>
</dbReference>
<dbReference type="RefSeq" id="WP_012460031.1">
    <property type="nucleotide sequence ID" value="NC_010730.1"/>
</dbReference>
<dbReference type="SMR" id="B2V5M9"/>
<dbReference type="STRING" id="436114.SYO3AOP1_1366"/>
<dbReference type="KEGG" id="sul:SYO3AOP1_1366"/>
<dbReference type="eggNOG" id="COG0718">
    <property type="taxonomic scope" value="Bacteria"/>
</dbReference>
<dbReference type="HOGENOM" id="CLU_140930_0_1_0"/>
<dbReference type="GO" id="GO:0043590">
    <property type="term" value="C:bacterial nucleoid"/>
    <property type="evidence" value="ECO:0007669"/>
    <property type="project" value="UniProtKB-UniRule"/>
</dbReference>
<dbReference type="GO" id="GO:0005829">
    <property type="term" value="C:cytosol"/>
    <property type="evidence" value="ECO:0007669"/>
    <property type="project" value="TreeGrafter"/>
</dbReference>
<dbReference type="GO" id="GO:0003677">
    <property type="term" value="F:DNA binding"/>
    <property type="evidence" value="ECO:0007669"/>
    <property type="project" value="UniProtKB-UniRule"/>
</dbReference>
<dbReference type="Gene3D" id="3.30.1310.10">
    <property type="entry name" value="Nucleoid-associated protein YbaB-like domain"/>
    <property type="match status" value="1"/>
</dbReference>
<dbReference type="HAMAP" id="MF_00274">
    <property type="entry name" value="DNA_YbaB_EbfC"/>
    <property type="match status" value="1"/>
</dbReference>
<dbReference type="InterPro" id="IPR036894">
    <property type="entry name" value="YbaB-like_sf"/>
</dbReference>
<dbReference type="InterPro" id="IPR004401">
    <property type="entry name" value="YbaB/EbfC"/>
</dbReference>
<dbReference type="NCBIfam" id="TIGR00103">
    <property type="entry name" value="DNA_YbaB_EbfC"/>
    <property type="match status" value="1"/>
</dbReference>
<dbReference type="PANTHER" id="PTHR33449">
    <property type="entry name" value="NUCLEOID-ASSOCIATED PROTEIN YBAB"/>
    <property type="match status" value="1"/>
</dbReference>
<dbReference type="PANTHER" id="PTHR33449:SF1">
    <property type="entry name" value="NUCLEOID-ASSOCIATED PROTEIN YBAB"/>
    <property type="match status" value="1"/>
</dbReference>
<dbReference type="Pfam" id="PF02575">
    <property type="entry name" value="YbaB_DNA_bd"/>
    <property type="match status" value="1"/>
</dbReference>
<dbReference type="PIRSF" id="PIRSF004555">
    <property type="entry name" value="UCP004555"/>
    <property type="match status" value="1"/>
</dbReference>
<dbReference type="SUPFAM" id="SSF82607">
    <property type="entry name" value="YbaB-like"/>
    <property type="match status" value="1"/>
</dbReference>
<protein>
    <recommendedName>
        <fullName evidence="1">Nucleoid-associated protein SYO3AOP1_1366</fullName>
    </recommendedName>
</protein>
<comment type="function">
    <text evidence="1">Binds to DNA and alters its conformation. May be involved in regulation of gene expression, nucleoid organization and DNA protection.</text>
</comment>
<comment type="subunit">
    <text evidence="1">Homodimer.</text>
</comment>
<comment type="subcellular location">
    <subcellularLocation>
        <location evidence="1">Cytoplasm</location>
        <location evidence="1">Nucleoid</location>
    </subcellularLocation>
</comment>
<comment type="similarity">
    <text evidence="1">Belongs to the YbaB/EbfC family.</text>
</comment>